<proteinExistence type="inferred from homology"/>
<reference key="1">
    <citation type="journal article" date="2004" name="Nature">
        <title>Genome evolution in yeasts.</title>
        <authorList>
            <person name="Dujon B."/>
            <person name="Sherman D."/>
            <person name="Fischer G."/>
            <person name="Durrens P."/>
            <person name="Casaregola S."/>
            <person name="Lafontaine I."/>
            <person name="de Montigny J."/>
            <person name="Marck C."/>
            <person name="Neuveglise C."/>
            <person name="Talla E."/>
            <person name="Goffard N."/>
            <person name="Frangeul L."/>
            <person name="Aigle M."/>
            <person name="Anthouard V."/>
            <person name="Babour A."/>
            <person name="Barbe V."/>
            <person name="Barnay S."/>
            <person name="Blanchin S."/>
            <person name="Beckerich J.-M."/>
            <person name="Beyne E."/>
            <person name="Bleykasten C."/>
            <person name="Boisrame A."/>
            <person name="Boyer J."/>
            <person name="Cattolico L."/>
            <person name="Confanioleri F."/>
            <person name="de Daruvar A."/>
            <person name="Despons L."/>
            <person name="Fabre E."/>
            <person name="Fairhead C."/>
            <person name="Ferry-Dumazet H."/>
            <person name="Groppi A."/>
            <person name="Hantraye F."/>
            <person name="Hennequin C."/>
            <person name="Jauniaux N."/>
            <person name="Joyet P."/>
            <person name="Kachouri R."/>
            <person name="Kerrest A."/>
            <person name="Koszul R."/>
            <person name="Lemaire M."/>
            <person name="Lesur I."/>
            <person name="Ma L."/>
            <person name="Muller H."/>
            <person name="Nicaud J.-M."/>
            <person name="Nikolski M."/>
            <person name="Oztas S."/>
            <person name="Ozier-Kalogeropoulos O."/>
            <person name="Pellenz S."/>
            <person name="Potier S."/>
            <person name="Richard G.-F."/>
            <person name="Straub M.-L."/>
            <person name="Suleau A."/>
            <person name="Swennen D."/>
            <person name="Tekaia F."/>
            <person name="Wesolowski-Louvel M."/>
            <person name="Westhof E."/>
            <person name="Wirth B."/>
            <person name="Zeniou-Meyer M."/>
            <person name="Zivanovic Y."/>
            <person name="Bolotin-Fukuhara M."/>
            <person name="Thierry A."/>
            <person name="Bouchier C."/>
            <person name="Caudron B."/>
            <person name="Scarpelli C."/>
            <person name="Gaillardin C."/>
            <person name="Weissenbach J."/>
            <person name="Wincker P."/>
            <person name="Souciet J.-L."/>
        </authorList>
    </citation>
    <scope>NUCLEOTIDE SEQUENCE [LARGE SCALE GENOMIC DNA]</scope>
    <source>
        <strain>ATCC 36239 / CBS 767 / BCRC 21394 / JCM 1990 / NBRC 0083 / IGC 2968</strain>
    </source>
</reference>
<dbReference type="EMBL" id="CR382139">
    <property type="protein sequence ID" value="CAG90353.2"/>
    <property type="molecule type" value="Genomic_DNA"/>
</dbReference>
<dbReference type="RefSeq" id="XP_461890.2">
    <property type="nucleotide sequence ID" value="XM_461890.2"/>
</dbReference>
<dbReference type="SMR" id="Q6BIT1"/>
<dbReference type="FunCoup" id="Q6BIT1">
    <property type="interactions" value="94"/>
</dbReference>
<dbReference type="STRING" id="284592.Q6BIT1"/>
<dbReference type="GeneID" id="2904771"/>
<dbReference type="KEGG" id="dha:DEHA2G07876g"/>
<dbReference type="VEuPathDB" id="FungiDB:DEHA2G07876g"/>
<dbReference type="eggNOG" id="KOG4431">
    <property type="taxonomic scope" value="Eukaryota"/>
</dbReference>
<dbReference type="HOGENOM" id="CLU_087356_1_0_1"/>
<dbReference type="InParanoid" id="Q6BIT1"/>
<dbReference type="OMA" id="QRWIREL"/>
<dbReference type="OrthoDB" id="6604018at2759"/>
<dbReference type="Proteomes" id="UP000000599">
    <property type="component" value="Chromosome G"/>
</dbReference>
<dbReference type="GO" id="GO:0005743">
    <property type="term" value="C:mitochondrial inner membrane"/>
    <property type="evidence" value="ECO:0007669"/>
    <property type="project" value="EnsemblFungi"/>
</dbReference>
<dbReference type="GO" id="GO:0098803">
    <property type="term" value="C:respiratory chain complex"/>
    <property type="evidence" value="ECO:0007669"/>
    <property type="project" value="EnsemblFungi"/>
</dbReference>
<dbReference type="GO" id="GO:0033617">
    <property type="term" value="P:mitochondrial cytochrome c oxidase assembly"/>
    <property type="evidence" value="ECO:0007669"/>
    <property type="project" value="EnsemblFungi"/>
</dbReference>
<dbReference type="GO" id="GO:0097250">
    <property type="term" value="P:mitochondrial respirasome assembly"/>
    <property type="evidence" value="ECO:0007669"/>
    <property type="project" value="EnsemblFungi"/>
</dbReference>
<dbReference type="GO" id="GO:0010155">
    <property type="term" value="P:regulation of proton transport"/>
    <property type="evidence" value="ECO:0007669"/>
    <property type="project" value="EnsemblFungi"/>
</dbReference>
<dbReference type="Gene3D" id="6.10.140.1320">
    <property type="match status" value="1"/>
</dbReference>
<dbReference type="InterPro" id="IPR007667">
    <property type="entry name" value="Hypoxia_induced_domain"/>
</dbReference>
<dbReference type="InterPro" id="IPR050355">
    <property type="entry name" value="RCF1"/>
</dbReference>
<dbReference type="PANTHER" id="PTHR12297:SF3">
    <property type="entry name" value="HIG1 DOMAIN FAMILY MEMBER 1A"/>
    <property type="match status" value="1"/>
</dbReference>
<dbReference type="PANTHER" id="PTHR12297">
    <property type="entry name" value="HYPOXIA-INDUCBILE GENE 1 HIG1 -RELATED"/>
    <property type="match status" value="1"/>
</dbReference>
<dbReference type="Pfam" id="PF04588">
    <property type="entry name" value="HIG_1_N"/>
    <property type="match status" value="1"/>
</dbReference>
<dbReference type="PROSITE" id="PS51503">
    <property type="entry name" value="HIG1"/>
    <property type="match status" value="1"/>
</dbReference>
<comment type="function">
    <text evidence="1">Cytochrome c oxidase subunit which plays a role in assembly of respiratory supercomplexes.</text>
</comment>
<comment type="subunit">
    <text evidence="1">Associates with the respiratory chain complex III/complex IV supercomplex.</text>
</comment>
<comment type="subcellular location">
    <subcellularLocation>
        <location evidence="3">Mitochondrion membrane</location>
        <topology evidence="3">Multi-pass membrane protein</topology>
    </subcellularLocation>
</comment>
<comment type="similarity">
    <text evidence="5">Belongs to the RCF1 family.</text>
</comment>
<feature type="chain" id="PRO_0000399632" description="Respiratory supercomplex factor 1, mitochondrial">
    <location>
        <begin position="1"/>
        <end position="175"/>
    </location>
</feature>
<feature type="transmembrane region" description="Helical" evidence="3">
    <location>
        <begin position="34"/>
        <end position="54"/>
    </location>
</feature>
<feature type="transmembrane region" description="Helical" evidence="3">
    <location>
        <begin position="70"/>
        <end position="90"/>
    </location>
</feature>
<feature type="domain" description="HIG1" evidence="3">
    <location>
        <begin position="7"/>
        <end position="98"/>
    </location>
</feature>
<feature type="region of interest" description="Disordered" evidence="4">
    <location>
        <begin position="147"/>
        <end position="175"/>
    </location>
</feature>
<feature type="coiled-coil region" evidence="2">
    <location>
        <begin position="90"/>
        <end position="144"/>
    </location>
</feature>
<name>RCF1_DEBHA</name>
<sequence>MSRELPSSFDGKSEFDEDEMDILEKMAFKCKQQPLVPLGVIATTGAIFLATKSIRKGDRVNTQKYFRYRVGFQLATLIALVAGGYMFQVESDEQKATREEILRAKAKVRERLWIEELERKDEAMKSRKKRLEDSRAELIQAAKEGFEEEKKWTDAIENAKEEESAEGNDNKDVSN</sequence>
<accession>Q6BIT1</accession>
<keyword id="KW-0175">Coiled coil</keyword>
<keyword id="KW-0472">Membrane</keyword>
<keyword id="KW-0496">Mitochondrion</keyword>
<keyword id="KW-1185">Reference proteome</keyword>
<keyword id="KW-0812">Transmembrane</keyword>
<keyword id="KW-1133">Transmembrane helix</keyword>
<organism>
    <name type="scientific">Debaryomyces hansenii (strain ATCC 36239 / CBS 767 / BCRC 21394 / JCM 1990 / NBRC 0083 / IGC 2968)</name>
    <name type="common">Yeast</name>
    <name type="synonym">Torulaspora hansenii</name>
    <dbReference type="NCBI Taxonomy" id="284592"/>
    <lineage>
        <taxon>Eukaryota</taxon>
        <taxon>Fungi</taxon>
        <taxon>Dikarya</taxon>
        <taxon>Ascomycota</taxon>
        <taxon>Saccharomycotina</taxon>
        <taxon>Pichiomycetes</taxon>
        <taxon>Debaryomycetaceae</taxon>
        <taxon>Debaryomyces</taxon>
    </lineage>
</organism>
<evidence type="ECO:0000250" key="1"/>
<evidence type="ECO:0000255" key="2"/>
<evidence type="ECO:0000255" key="3">
    <source>
        <dbReference type="PROSITE-ProRule" id="PRU00836"/>
    </source>
</evidence>
<evidence type="ECO:0000256" key="4">
    <source>
        <dbReference type="SAM" id="MobiDB-lite"/>
    </source>
</evidence>
<evidence type="ECO:0000305" key="5"/>
<gene>
    <name type="primary">RCF1</name>
    <name type="synonym">AIM31</name>
    <name type="ordered locus">DEHA2G07876g</name>
</gene>
<protein>
    <recommendedName>
        <fullName>Respiratory supercomplex factor 1, mitochondrial</fullName>
    </recommendedName>
</protein>